<protein>
    <recommendedName>
        <fullName evidence="1">Ubiquinone/menaquinone biosynthesis C-methyltransferase UbiE</fullName>
        <ecNumber evidence="1">2.1.1.163</ecNumber>
        <ecNumber evidence="1">2.1.1.201</ecNumber>
    </recommendedName>
    <alternativeName>
        <fullName evidence="1">2-methoxy-6-polyprenyl-1,4-benzoquinol methylase</fullName>
    </alternativeName>
    <alternativeName>
        <fullName evidence="1">Demethylmenaquinone methyltransferase</fullName>
    </alternativeName>
</protein>
<feature type="chain" id="PRO_1000056276" description="Ubiquinone/menaquinone biosynthesis C-methyltransferase UbiE">
    <location>
        <begin position="1"/>
        <end position="256"/>
    </location>
</feature>
<feature type="region of interest" description="Disordered" evidence="2">
    <location>
        <begin position="1"/>
        <end position="23"/>
    </location>
</feature>
<feature type="compositionally biased region" description="Basic and acidic residues" evidence="2">
    <location>
        <begin position="1"/>
        <end position="12"/>
    </location>
</feature>
<feature type="binding site" evidence="1">
    <location>
        <position position="79"/>
    </location>
    <ligand>
        <name>S-adenosyl-L-methionine</name>
        <dbReference type="ChEBI" id="CHEBI:59789"/>
    </ligand>
</feature>
<feature type="binding site" evidence="1">
    <location>
        <position position="100"/>
    </location>
    <ligand>
        <name>S-adenosyl-L-methionine</name>
        <dbReference type="ChEBI" id="CHEBI:59789"/>
    </ligand>
</feature>
<feature type="binding site" evidence="1">
    <location>
        <begin position="128"/>
        <end position="129"/>
    </location>
    <ligand>
        <name>S-adenosyl-L-methionine</name>
        <dbReference type="ChEBI" id="CHEBI:59789"/>
    </ligand>
</feature>
<proteinExistence type="inferred from homology"/>
<reference key="1">
    <citation type="submission" date="2007-05" db="EMBL/GenBank/DDBJ databases">
        <title>Complete sequence of Pseudomonas putida F1.</title>
        <authorList>
            <consortium name="US DOE Joint Genome Institute"/>
            <person name="Copeland A."/>
            <person name="Lucas S."/>
            <person name="Lapidus A."/>
            <person name="Barry K."/>
            <person name="Detter J.C."/>
            <person name="Glavina del Rio T."/>
            <person name="Hammon N."/>
            <person name="Israni S."/>
            <person name="Dalin E."/>
            <person name="Tice H."/>
            <person name="Pitluck S."/>
            <person name="Chain P."/>
            <person name="Malfatti S."/>
            <person name="Shin M."/>
            <person name="Vergez L."/>
            <person name="Schmutz J."/>
            <person name="Larimer F."/>
            <person name="Land M."/>
            <person name="Hauser L."/>
            <person name="Kyrpides N."/>
            <person name="Lykidis A."/>
            <person name="Parales R."/>
            <person name="Richardson P."/>
        </authorList>
    </citation>
    <scope>NUCLEOTIDE SEQUENCE [LARGE SCALE GENOMIC DNA]</scope>
    <source>
        <strain>ATCC 700007 / DSM 6899 / JCM 31910 / BCRC 17059 / LMG 24140 / F1</strain>
    </source>
</reference>
<name>UBIE_PSEP1</name>
<keyword id="KW-0474">Menaquinone biosynthesis</keyword>
<keyword id="KW-0489">Methyltransferase</keyword>
<keyword id="KW-0949">S-adenosyl-L-methionine</keyword>
<keyword id="KW-0808">Transferase</keyword>
<keyword id="KW-0831">Ubiquinone biosynthesis</keyword>
<gene>
    <name evidence="1" type="primary">ubiE</name>
    <name type="ordered locus">Pput_4885</name>
</gene>
<organism>
    <name type="scientific">Pseudomonas putida (strain ATCC 700007 / DSM 6899 / JCM 31910 / BCRC 17059 / LMG 24140 / F1)</name>
    <dbReference type="NCBI Taxonomy" id="351746"/>
    <lineage>
        <taxon>Bacteria</taxon>
        <taxon>Pseudomonadati</taxon>
        <taxon>Pseudomonadota</taxon>
        <taxon>Gammaproteobacteria</taxon>
        <taxon>Pseudomonadales</taxon>
        <taxon>Pseudomonadaceae</taxon>
        <taxon>Pseudomonas</taxon>
    </lineage>
</organism>
<accession>A5WA45</accession>
<sequence>MNDQRKGDHAEPTTHFGYQDVPESQKAKKVAEVFHSVAAKYDLMNDVLSGGMHRLWKRFTIELSGVRSGNRVLDIAGGTGDLAAKFSRLVGPTGQVVLADINDSMLKVGRDRLLDRGVAGNIEFVQADAEKLPFPDNHFDCVTIAFGLRNVTHKDAAIRSMLRVLKPGGRLLILEFSKPTNKLMSKAYDAYSFAFMPLAGKLITNDAESYRYLAESIRMHPDQETLKSMMVEAGFDRVTYHNMTSGIVAVHRGIKP</sequence>
<dbReference type="EC" id="2.1.1.163" evidence="1"/>
<dbReference type="EC" id="2.1.1.201" evidence="1"/>
<dbReference type="EMBL" id="CP000712">
    <property type="protein sequence ID" value="ABQ81005.1"/>
    <property type="molecule type" value="Genomic_DNA"/>
</dbReference>
<dbReference type="SMR" id="A5WA45"/>
<dbReference type="KEGG" id="ppf:Pput_4885"/>
<dbReference type="eggNOG" id="COG2226">
    <property type="taxonomic scope" value="Bacteria"/>
</dbReference>
<dbReference type="HOGENOM" id="CLU_037990_0_0_6"/>
<dbReference type="UniPathway" id="UPA00079">
    <property type="reaction ID" value="UER00169"/>
</dbReference>
<dbReference type="UniPathway" id="UPA00232"/>
<dbReference type="GO" id="GO:0008425">
    <property type="term" value="F:2-methoxy-6-polyprenyl-1,4-benzoquinol methyltransferase activity"/>
    <property type="evidence" value="ECO:0007669"/>
    <property type="project" value="UniProtKB-UniRule"/>
</dbReference>
<dbReference type="GO" id="GO:0043770">
    <property type="term" value="F:demethylmenaquinone methyltransferase activity"/>
    <property type="evidence" value="ECO:0007669"/>
    <property type="project" value="UniProtKB-UniRule"/>
</dbReference>
<dbReference type="GO" id="GO:0009060">
    <property type="term" value="P:aerobic respiration"/>
    <property type="evidence" value="ECO:0007669"/>
    <property type="project" value="UniProtKB-UniRule"/>
</dbReference>
<dbReference type="GO" id="GO:0009234">
    <property type="term" value="P:menaquinone biosynthetic process"/>
    <property type="evidence" value="ECO:0007669"/>
    <property type="project" value="UniProtKB-UniRule"/>
</dbReference>
<dbReference type="GO" id="GO:0032259">
    <property type="term" value="P:methylation"/>
    <property type="evidence" value="ECO:0007669"/>
    <property type="project" value="UniProtKB-KW"/>
</dbReference>
<dbReference type="CDD" id="cd02440">
    <property type="entry name" value="AdoMet_MTases"/>
    <property type="match status" value="1"/>
</dbReference>
<dbReference type="FunFam" id="3.40.50.150:FF:000014">
    <property type="entry name" value="Ubiquinone/menaquinone biosynthesis C-methyltransferase UbiE"/>
    <property type="match status" value="1"/>
</dbReference>
<dbReference type="Gene3D" id="3.40.50.150">
    <property type="entry name" value="Vaccinia Virus protein VP39"/>
    <property type="match status" value="1"/>
</dbReference>
<dbReference type="HAMAP" id="MF_01813">
    <property type="entry name" value="MenG_UbiE_methyltr"/>
    <property type="match status" value="1"/>
</dbReference>
<dbReference type="InterPro" id="IPR029063">
    <property type="entry name" value="SAM-dependent_MTases_sf"/>
</dbReference>
<dbReference type="InterPro" id="IPR004033">
    <property type="entry name" value="UbiE/COQ5_MeTrFase"/>
</dbReference>
<dbReference type="InterPro" id="IPR023576">
    <property type="entry name" value="UbiE/COQ5_MeTrFase_CS"/>
</dbReference>
<dbReference type="NCBIfam" id="TIGR01934">
    <property type="entry name" value="MenG_MenH_UbiE"/>
    <property type="match status" value="1"/>
</dbReference>
<dbReference type="NCBIfam" id="NF001240">
    <property type="entry name" value="PRK00216.1-1"/>
    <property type="match status" value="1"/>
</dbReference>
<dbReference type="NCBIfam" id="NF001244">
    <property type="entry name" value="PRK00216.1-5"/>
    <property type="match status" value="1"/>
</dbReference>
<dbReference type="PANTHER" id="PTHR43591:SF24">
    <property type="entry name" value="2-METHOXY-6-POLYPRENYL-1,4-BENZOQUINOL METHYLASE, MITOCHONDRIAL"/>
    <property type="match status" value="1"/>
</dbReference>
<dbReference type="PANTHER" id="PTHR43591">
    <property type="entry name" value="METHYLTRANSFERASE"/>
    <property type="match status" value="1"/>
</dbReference>
<dbReference type="Pfam" id="PF01209">
    <property type="entry name" value="Ubie_methyltran"/>
    <property type="match status" value="1"/>
</dbReference>
<dbReference type="SUPFAM" id="SSF53335">
    <property type="entry name" value="S-adenosyl-L-methionine-dependent methyltransferases"/>
    <property type="match status" value="1"/>
</dbReference>
<dbReference type="PROSITE" id="PS51608">
    <property type="entry name" value="SAM_MT_UBIE"/>
    <property type="match status" value="1"/>
</dbReference>
<dbReference type="PROSITE" id="PS01183">
    <property type="entry name" value="UBIE_1"/>
    <property type="match status" value="1"/>
</dbReference>
<dbReference type="PROSITE" id="PS01184">
    <property type="entry name" value="UBIE_2"/>
    <property type="match status" value="1"/>
</dbReference>
<evidence type="ECO:0000255" key="1">
    <source>
        <dbReference type="HAMAP-Rule" id="MF_01813"/>
    </source>
</evidence>
<evidence type="ECO:0000256" key="2">
    <source>
        <dbReference type="SAM" id="MobiDB-lite"/>
    </source>
</evidence>
<comment type="function">
    <text evidence="1">Methyltransferase required for the conversion of demethylmenaquinol (DMKH2) to menaquinol (MKH2) and the conversion of 2-polyprenyl-6-methoxy-1,4-benzoquinol (DDMQH2) to 2-polyprenyl-3-methyl-6-methoxy-1,4-benzoquinol (DMQH2).</text>
</comment>
<comment type="catalytic activity">
    <reaction evidence="1">
        <text>a 2-demethylmenaquinol + S-adenosyl-L-methionine = a menaquinol + S-adenosyl-L-homocysteine + H(+)</text>
        <dbReference type="Rhea" id="RHEA:42640"/>
        <dbReference type="Rhea" id="RHEA-COMP:9539"/>
        <dbReference type="Rhea" id="RHEA-COMP:9563"/>
        <dbReference type="ChEBI" id="CHEBI:15378"/>
        <dbReference type="ChEBI" id="CHEBI:18151"/>
        <dbReference type="ChEBI" id="CHEBI:55437"/>
        <dbReference type="ChEBI" id="CHEBI:57856"/>
        <dbReference type="ChEBI" id="CHEBI:59789"/>
        <dbReference type="EC" id="2.1.1.163"/>
    </reaction>
</comment>
<comment type="catalytic activity">
    <reaction evidence="1">
        <text>a 2-methoxy-6-(all-trans-polyprenyl)benzene-1,4-diol + S-adenosyl-L-methionine = a 5-methoxy-2-methyl-3-(all-trans-polyprenyl)benzene-1,4-diol + S-adenosyl-L-homocysteine + H(+)</text>
        <dbReference type="Rhea" id="RHEA:28286"/>
        <dbReference type="Rhea" id="RHEA-COMP:10858"/>
        <dbReference type="Rhea" id="RHEA-COMP:10859"/>
        <dbReference type="ChEBI" id="CHEBI:15378"/>
        <dbReference type="ChEBI" id="CHEBI:57856"/>
        <dbReference type="ChEBI" id="CHEBI:59789"/>
        <dbReference type="ChEBI" id="CHEBI:84166"/>
        <dbReference type="ChEBI" id="CHEBI:84167"/>
        <dbReference type="EC" id="2.1.1.201"/>
    </reaction>
</comment>
<comment type="pathway">
    <text evidence="1">Quinol/quinone metabolism; menaquinone biosynthesis; menaquinol from 1,4-dihydroxy-2-naphthoate: step 2/2.</text>
</comment>
<comment type="pathway">
    <text evidence="1">Cofactor biosynthesis; ubiquinone biosynthesis.</text>
</comment>
<comment type="similarity">
    <text evidence="1">Belongs to the class I-like SAM-binding methyltransferase superfamily. MenG/UbiE family.</text>
</comment>